<reference key="1">
    <citation type="submission" date="2004-12" db="EMBL/GenBank/DDBJ databases">
        <title>The genome sequence of Borrelia hermsii and Borrelia turicatae: comparative analysis of two agents of endemic N. America relapsing fever.</title>
        <authorList>
            <person name="Porcella S.F."/>
            <person name="Raffel S.J."/>
            <person name="Schrumpf M.E."/>
            <person name="Montgomery B."/>
            <person name="Smith T."/>
            <person name="Schwan T.G."/>
        </authorList>
    </citation>
    <scope>NUCLEOTIDE SEQUENCE [LARGE SCALE GENOMIC DNA]</scope>
    <source>
        <strain>HS1 / DAH</strain>
    </source>
</reference>
<proteinExistence type="inferred from homology"/>
<sequence>MAVTHSVGDMLTKIRNASRVKHESVDLKMSKINKSILDILREEGYIKGYNIFDNKGISFIKAILNYDSKRNPAINRIDAISTPGRKVYSSYKNMPRIKNGYGILIVSSSKGVITGKQAKDNKVGGELICSVW</sequence>
<protein>
    <recommendedName>
        <fullName evidence="1">Small ribosomal subunit protein uS8</fullName>
    </recommendedName>
    <alternativeName>
        <fullName evidence="2">30S ribosomal protein S8</fullName>
    </alternativeName>
</protein>
<dbReference type="EMBL" id="CP000048">
    <property type="protein sequence ID" value="AAX17001.1"/>
    <property type="molecule type" value="Genomic_DNA"/>
</dbReference>
<dbReference type="RefSeq" id="WP_012422254.1">
    <property type="nucleotide sequence ID" value="NZ_CP073136.1"/>
</dbReference>
<dbReference type="SMR" id="B2S0J5"/>
<dbReference type="GeneID" id="71843310"/>
<dbReference type="KEGG" id="bhr:BH0492"/>
<dbReference type="HOGENOM" id="CLU_098428_0_2_12"/>
<dbReference type="Proteomes" id="UP000008834">
    <property type="component" value="Chromosome"/>
</dbReference>
<dbReference type="GO" id="GO:1990904">
    <property type="term" value="C:ribonucleoprotein complex"/>
    <property type="evidence" value="ECO:0007669"/>
    <property type="project" value="UniProtKB-KW"/>
</dbReference>
<dbReference type="GO" id="GO:0005840">
    <property type="term" value="C:ribosome"/>
    <property type="evidence" value="ECO:0007669"/>
    <property type="project" value="UniProtKB-KW"/>
</dbReference>
<dbReference type="GO" id="GO:0019843">
    <property type="term" value="F:rRNA binding"/>
    <property type="evidence" value="ECO:0007669"/>
    <property type="project" value="UniProtKB-UniRule"/>
</dbReference>
<dbReference type="GO" id="GO:0003735">
    <property type="term" value="F:structural constituent of ribosome"/>
    <property type="evidence" value="ECO:0007669"/>
    <property type="project" value="InterPro"/>
</dbReference>
<dbReference type="GO" id="GO:0006412">
    <property type="term" value="P:translation"/>
    <property type="evidence" value="ECO:0007669"/>
    <property type="project" value="UniProtKB-UniRule"/>
</dbReference>
<dbReference type="FunFam" id="3.30.1490.10:FF:000001">
    <property type="entry name" value="30S ribosomal protein S8"/>
    <property type="match status" value="1"/>
</dbReference>
<dbReference type="Gene3D" id="3.30.1370.30">
    <property type="match status" value="1"/>
</dbReference>
<dbReference type="Gene3D" id="3.30.1490.10">
    <property type="match status" value="1"/>
</dbReference>
<dbReference type="HAMAP" id="MF_01302_B">
    <property type="entry name" value="Ribosomal_uS8_B"/>
    <property type="match status" value="1"/>
</dbReference>
<dbReference type="InterPro" id="IPR000630">
    <property type="entry name" value="Ribosomal_uS8"/>
</dbReference>
<dbReference type="InterPro" id="IPR047863">
    <property type="entry name" value="Ribosomal_uS8_CS"/>
</dbReference>
<dbReference type="InterPro" id="IPR035987">
    <property type="entry name" value="Ribosomal_uS8_sf"/>
</dbReference>
<dbReference type="NCBIfam" id="NF001109">
    <property type="entry name" value="PRK00136.1"/>
    <property type="match status" value="1"/>
</dbReference>
<dbReference type="PANTHER" id="PTHR11758">
    <property type="entry name" value="40S RIBOSOMAL PROTEIN S15A"/>
    <property type="match status" value="1"/>
</dbReference>
<dbReference type="Pfam" id="PF00410">
    <property type="entry name" value="Ribosomal_S8"/>
    <property type="match status" value="1"/>
</dbReference>
<dbReference type="SUPFAM" id="SSF56047">
    <property type="entry name" value="Ribosomal protein S8"/>
    <property type="match status" value="1"/>
</dbReference>
<dbReference type="PROSITE" id="PS00053">
    <property type="entry name" value="RIBOSOMAL_S8"/>
    <property type="match status" value="1"/>
</dbReference>
<keyword id="KW-0687">Ribonucleoprotein</keyword>
<keyword id="KW-0689">Ribosomal protein</keyword>
<keyword id="KW-0694">RNA-binding</keyword>
<keyword id="KW-0699">rRNA-binding</keyword>
<organism>
    <name type="scientific">Borrelia hermsii (strain HS1 / DAH)</name>
    <dbReference type="NCBI Taxonomy" id="314723"/>
    <lineage>
        <taxon>Bacteria</taxon>
        <taxon>Pseudomonadati</taxon>
        <taxon>Spirochaetota</taxon>
        <taxon>Spirochaetia</taxon>
        <taxon>Spirochaetales</taxon>
        <taxon>Borreliaceae</taxon>
        <taxon>Borrelia</taxon>
    </lineage>
</organism>
<evidence type="ECO:0000255" key="1">
    <source>
        <dbReference type="HAMAP-Rule" id="MF_01302"/>
    </source>
</evidence>
<evidence type="ECO:0000305" key="2"/>
<comment type="function">
    <text evidence="1">One of the primary rRNA binding proteins, it binds directly to 16S rRNA central domain where it helps coordinate assembly of the platform of the 30S subunit.</text>
</comment>
<comment type="subunit">
    <text evidence="1">Part of the 30S ribosomal subunit. Contacts proteins S5 and S12.</text>
</comment>
<comment type="similarity">
    <text evidence="1">Belongs to the universal ribosomal protein uS8 family.</text>
</comment>
<feature type="chain" id="PRO_1000140517" description="Small ribosomal subunit protein uS8">
    <location>
        <begin position="1"/>
        <end position="132"/>
    </location>
</feature>
<accession>B2S0J5</accession>
<name>RS8_BORHD</name>
<gene>
    <name evidence="1" type="primary">rpsH</name>
    <name type="ordered locus">BH0492</name>
</gene>